<dbReference type="EC" id="2.7.11.13" evidence="10"/>
<dbReference type="EMBL" id="AK037030">
    <property type="protein sequence ID" value="BAC29677.1"/>
    <property type="molecule type" value="mRNA"/>
</dbReference>
<dbReference type="EMBL" id="AK154029">
    <property type="protein sequence ID" value="BAE32326.1"/>
    <property type="molecule type" value="mRNA"/>
</dbReference>
<dbReference type="EMBL" id="AK170236">
    <property type="protein sequence ID" value="BAE41652.1"/>
    <property type="molecule type" value="mRNA"/>
</dbReference>
<dbReference type="EMBL" id="AK170761">
    <property type="protein sequence ID" value="BAE42012.1"/>
    <property type="molecule type" value="mRNA"/>
</dbReference>
<dbReference type="EMBL" id="BC095949">
    <property type="protein sequence ID" value="AAH95949.1"/>
    <property type="molecule type" value="mRNA"/>
</dbReference>
<dbReference type="EMBL" id="BC096444">
    <property type="protein sequence ID" value="AAH96444.1"/>
    <property type="molecule type" value="mRNA"/>
</dbReference>
<dbReference type="CCDS" id="CCDS20855.1"/>
<dbReference type="RefSeq" id="NP_001239387.1">
    <property type="nucleotide sequence ID" value="NM_001252458.1"/>
</dbReference>
<dbReference type="RefSeq" id="NP_849231.1">
    <property type="nucleotide sequence ID" value="NM_178900.4"/>
</dbReference>
<dbReference type="SMR" id="Q8BZ03"/>
<dbReference type="BioGRID" id="221683">
    <property type="interactions" value="3"/>
</dbReference>
<dbReference type="FunCoup" id="Q8BZ03">
    <property type="interactions" value="2834"/>
</dbReference>
<dbReference type="STRING" id="10090.ENSMUSP00000083273"/>
<dbReference type="iPTMnet" id="Q8BZ03"/>
<dbReference type="PhosphoSitePlus" id="Q8BZ03"/>
<dbReference type="jPOST" id="Q8BZ03"/>
<dbReference type="PaxDb" id="10090-ENSMUSP00000083273"/>
<dbReference type="PeptideAtlas" id="Q8BZ03"/>
<dbReference type="ProteomicsDB" id="265019"/>
<dbReference type="Pumba" id="Q8BZ03"/>
<dbReference type="Antibodypedia" id="18122">
    <property type="antibodies" value="618 antibodies from 41 providers"/>
</dbReference>
<dbReference type="DNASU" id="101540"/>
<dbReference type="Ensembl" id="ENSMUST00000086104.6">
    <property type="protein sequence ID" value="ENSMUSP00000083273.5"/>
    <property type="gene ID" value="ENSMUSG00000041187.17"/>
</dbReference>
<dbReference type="Ensembl" id="ENSMUST00000168093.9">
    <property type="protein sequence ID" value="ENSMUSP00000131192.3"/>
    <property type="gene ID" value="ENSMUSG00000041187.17"/>
</dbReference>
<dbReference type="GeneID" id="101540"/>
<dbReference type="KEGG" id="mmu:101540"/>
<dbReference type="UCSC" id="uc009fig.2">
    <property type="organism name" value="mouse"/>
</dbReference>
<dbReference type="AGR" id="MGI:2141917"/>
<dbReference type="CTD" id="25865"/>
<dbReference type="MGI" id="MGI:2141917">
    <property type="gene designation" value="Prkd2"/>
</dbReference>
<dbReference type="VEuPathDB" id="HostDB:ENSMUSG00000041187"/>
<dbReference type="eggNOG" id="KOG4236">
    <property type="taxonomic scope" value="Eukaryota"/>
</dbReference>
<dbReference type="GeneTree" id="ENSGT00950000183024"/>
<dbReference type="HOGENOM" id="CLU_009772_1_0_1"/>
<dbReference type="InParanoid" id="Q8BZ03"/>
<dbReference type="OMA" id="PNNCSHD"/>
<dbReference type="OrthoDB" id="74314at2759"/>
<dbReference type="PhylomeDB" id="Q8BZ03"/>
<dbReference type="TreeFam" id="TF314320"/>
<dbReference type="BioGRID-ORCS" id="101540">
    <property type="hits" value="5 hits in 82 CRISPR screens"/>
</dbReference>
<dbReference type="ChiTaRS" id="Prkd2">
    <property type="organism name" value="mouse"/>
</dbReference>
<dbReference type="PRO" id="PR:Q8BZ03"/>
<dbReference type="Proteomes" id="UP000000589">
    <property type="component" value="Chromosome 7"/>
</dbReference>
<dbReference type="RNAct" id="Q8BZ03">
    <property type="molecule type" value="protein"/>
</dbReference>
<dbReference type="Bgee" id="ENSMUSG00000041187">
    <property type="expression patterns" value="Expressed in peripheral lymph node and 205 other cell types or tissues"/>
</dbReference>
<dbReference type="GO" id="GO:0005829">
    <property type="term" value="C:cytosol"/>
    <property type="evidence" value="ECO:0007669"/>
    <property type="project" value="Ensembl"/>
</dbReference>
<dbReference type="GO" id="GO:0005794">
    <property type="term" value="C:Golgi apparatus"/>
    <property type="evidence" value="ECO:0007669"/>
    <property type="project" value="UniProtKB-SubCell"/>
</dbReference>
<dbReference type="GO" id="GO:0005654">
    <property type="term" value="C:nucleoplasm"/>
    <property type="evidence" value="ECO:0007669"/>
    <property type="project" value="Ensembl"/>
</dbReference>
<dbReference type="GO" id="GO:0005886">
    <property type="term" value="C:plasma membrane"/>
    <property type="evidence" value="ECO:0007669"/>
    <property type="project" value="UniProtKB-SubCell"/>
</dbReference>
<dbReference type="GO" id="GO:0005524">
    <property type="term" value="F:ATP binding"/>
    <property type="evidence" value="ECO:0007669"/>
    <property type="project" value="UniProtKB-KW"/>
</dbReference>
<dbReference type="GO" id="GO:0004697">
    <property type="term" value="F:diacylglycerol-dependent serine/threonine kinase activity"/>
    <property type="evidence" value="ECO:0007669"/>
    <property type="project" value="UniProtKB-EC"/>
</dbReference>
<dbReference type="GO" id="GO:0005080">
    <property type="term" value="F:protein kinase C binding"/>
    <property type="evidence" value="ECO:0007669"/>
    <property type="project" value="Ensembl"/>
</dbReference>
<dbReference type="GO" id="GO:0106310">
    <property type="term" value="F:protein serine kinase activity"/>
    <property type="evidence" value="ECO:0007669"/>
    <property type="project" value="Ensembl"/>
</dbReference>
<dbReference type="GO" id="GO:0008270">
    <property type="term" value="F:zinc ion binding"/>
    <property type="evidence" value="ECO:0007669"/>
    <property type="project" value="UniProtKB-KW"/>
</dbReference>
<dbReference type="GO" id="GO:0002250">
    <property type="term" value="P:adaptive immune response"/>
    <property type="evidence" value="ECO:0007669"/>
    <property type="project" value="UniProtKB-KW"/>
</dbReference>
<dbReference type="GO" id="GO:0001525">
    <property type="term" value="P:angiogenesis"/>
    <property type="evidence" value="ECO:0007669"/>
    <property type="project" value="UniProtKB-KW"/>
</dbReference>
<dbReference type="GO" id="GO:0007155">
    <property type="term" value="P:cell adhesion"/>
    <property type="evidence" value="ECO:0007669"/>
    <property type="project" value="UniProtKB-KW"/>
</dbReference>
<dbReference type="GO" id="GO:0035924">
    <property type="term" value="P:cellular response to vascular endothelial growth factor stimulus"/>
    <property type="evidence" value="ECO:0007669"/>
    <property type="project" value="Ensembl"/>
</dbReference>
<dbReference type="GO" id="GO:0035556">
    <property type="term" value="P:intracellular signal transduction"/>
    <property type="evidence" value="ECO:0007669"/>
    <property type="project" value="Ensembl"/>
</dbReference>
<dbReference type="GO" id="GO:0045766">
    <property type="term" value="P:positive regulation of angiogenesis"/>
    <property type="evidence" value="ECO:0000250"/>
    <property type="project" value="UniProtKB"/>
</dbReference>
<dbReference type="GO" id="GO:0043536">
    <property type="term" value="P:positive regulation of blood vessel endothelial cell migration"/>
    <property type="evidence" value="ECO:0007669"/>
    <property type="project" value="Ensembl"/>
</dbReference>
<dbReference type="GO" id="GO:0045785">
    <property type="term" value="P:positive regulation of cell adhesion"/>
    <property type="evidence" value="ECO:0000250"/>
    <property type="project" value="UniProtKB"/>
</dbReference>
<dbReference type="GO" id="GO:2000573">
    <property type="term" value="P:positive regulation of DNA biosynthetic process"/>
    <property type="evidence" value="ECO:0000314"/>
    <property type="project" value="UniProtKB"/>
</dbReference>
<dbReference type="GO" id="GO:0051091">
    <property type="term" value="P:positive regulation of DNA-binding transcription factor activity"/>
    <property type="evidence" value="ECO:0000250"/>
    <property type="project" value="UniProtKB"/>
</dbReference>
<dbReference type="GO" id="GO:2001028">
    <property type="term" value="P:positive regulation of endothelial cell chemotaxis"/>
    <property type="evidence" value="ECO:0007669"/>
    <property type="project" value="Ensembl"/>
</dbReference>
<dbReference type="GO" id="GO:0010595">
    <property type="term" value="P:positive regulation of endothelial cell migration"/>
    <property type="evidence" value="ECO:0000250"/>
    <property type="project" value="UniProtKB"/>
</dbReference>
<dbReference type="GO" id="GO:0001938">
    <property type="term" value="P:positive regulation of endothelial cell proliferation"/>
    <property type="evidence" value="ECO:0000250"/>
    <property type="project" value="UniProtKB"/>
</dbReference>
<dbReference type="GO" id="GO:0070374">
    <property type="term" value="P:positive regulation of ERK1 and ERK2 cascade"/>
    <property type="evidence" value="ECO:0000314"/>
    <property type="project" value="UniProtKB"/>
</dbReference>
<dbReference type="GO" id="GO:0045743">
    <property type="term" value="P:positive regulation of fibroblast growth factor receptor signaling pathway"/>
    <property type="evidence" value="ECO:0000250"/>
    <property type="project" value="UniProtKB"/>
</dbReference>
<dbReference type="GO" id="GO:0032743">
    <property type="term" value="P:positive regulation of interleukin-2 production"/>
    <property type="evidence" value="ECO:0000315"/>
    <property type="project" value="UniProtKB"/>
</dbReference>
<dbReference type="GO" id="GO:0032757">
    <property type="term" value="P:positive regulation of interleukin-8 production"/>
    <property type="evidence" value="ECO:0000250"/>
    <property type="project" value="UniProtKB"/>
</dbReference>
<dbReference type="GO" id="GO:0051092">
    <property type="term" value="P:positive regulation of NF-kappaB transcription factor activity"/>
    <property type="evidence" value="ECO:0000250"/>
    <property type="project" value="UniProtKB"/>
</dbReference>
<dbReference type="GO" id="GO:0050862">
    <property type="term" value="P:positive regulation of T cell receptor signaling pathway"/>
    <property type="evidence" value="ECO:0000315"/>
    <property type="project" value="UniProtKB"/>
</dbReference>
<dbReference type="GO" id="GO:0045944">
    <property type="term" value="P:positive regulation of transcription by RNA polymerase II"/>
    <property type="evidence" value="ECO:0007669"/>
    <property type="project" value="Ensembl"/>
</dbReference>
<dbReference type="GO" id="GO:0030949">
    <property type="term" value="P:positive regulation of vascular endothelial growth factor receptor signaling pathway"/>
    <property type="evidence" value="ECO:0000250"/>
    <property type="project" value="UniProtKB"/>
</dbReference>
<dbReference type="GO" id="GO:0070232">
    <property type="term" value="P:regulation of T cell apoptotic process"/>
    <property type="evidence" value="ECO:0007669"/>
    <property type="project" value="Ensembl"/>
</dbReference>
<dbReference type="GO" id="GO:0050852">
    <property type="term" value="P:T cell receptor signaling pathway"/>
    <property type="evidence" value="ECO:0007669"/>
    <property type="project" value="Ensembl"/>
</dbReference>
<dbReference type="GO" id="GO:0048010">
    <property type="term" value="P:vascular endothelial growth factor receptor signaling pathway"/>
    <property type="evidence" value="ECO:0007669"/>
    <property type="project" value="Ensembl"/>
</dbReference>
<dbReference type="CDD" id="cd20840">
    <property type="entry name" value="C1_PKD2_rpt1"/>
    <property type="match status" value="1"/>
</dbReference>
<dbReference type="CDD" id="cd20843">
    <property type="entry name" value="C1_PKD2_rpt2"/>
    <property type="match status" value="1"/>
</dbReference>
<dbReference type="CDD" id="cd01239">
    <property type="entry name" value="PH_PKD"/>
    <property type="match status" value="1"/>
</dbReference>
<dbReference type="CDD" id="cd14082">
    <property type="entry name" value="STKc_PKD"/>
    <property type="match status" value="1"/>
</dbReference>
<dbReference type="FunFam" id="1.10.510.10:FF:000151">
    <property type="entry name" value="Serine/threonine-protein kinase"/>
    <property type="match status" value="1"/>
</dbReference>
<dbReference type="FunFam" id="2.30.29.30:FF:000056">
    <property type="entry name" value="Serine/threonine-protein kinase"/>
    <property type="match status" value="1"/>
</dbReference>
<dbReference type="FunFam" id="3.30.200.20:FF:000137">
    <property type="entry name" value="Serine/threonine-protein kinase"/>
    <property type="match status" value="1"/>
</dbReference>
<dbReference type="FunFam" id="3.30.60.20:FF:000007">
    <property type="entry name" value="Serine/threonine-protein kinase"/>
    <property type="match status" value="1"/>
</dbReference>
<dbReference type="FunFam" id="3.30.60.20:FF:000019">
    <property type="entry name" value="Serine/threonine-protein kinase"/>
    <property type="match status" value="1"/>
</dbReference>
<dbReference type="Gene3D" id="3.30.60.20">
    <property type="match status" value="2"/>
</dbReference>
<dbReference type="Gene3D" id="2.30.29.30">
    <property type="entry name" value="Pleckstrin-homology domain (PH domain)/Phosphotyrosine-binding domain (PTB)"/>
    <property type="match status" value="1"/>
</dbReference>
<dbReference type="Gene3D" id="1.10.510.10">
    <property type="entry name" value="Transferase(Phosphotransferase) domain 1"/>
    <property type="match status" value="1"/>
</dbReference>
<dbReference type="InterPro" id="IPR046349">
    <property type="entry name" value="C1-like_sf"/>
</dbReference>
<dbReference type="InterPro" id="IPR020454">
    <property type="entry name" value="DAG/PE-bd"/>
</dbReference>
<dbReference type="InterPro" id="IPR011009">
    <property type="entry name" value="Kinase-like_dom_sf"/>
</dbReference>
<dbReference type="InterPro" id="IPR002219">
    <property type="entry name" value="PE/DAG-bd"/>
</dbReference>
<dbReference type="InterPro" id="IPR011993">
    <property type="entry name" value="PH-like_dom_sf"/>
</dbReference>
<dbReference type="InterPro" id="IPR001849">
    <property type="entry name" value="PH_domain"/>
</dbReference>
<dbReference type="InterPro" id="IPR000719">
    <property type="entry name" value="Prot_kinase_dom"/>
</dbReference>
<dbReference type="InterPro" id="IPR017441">
    <property type="entry name" value="Protein_kinase_ATP_BS"/>
</dbReference>
<dbReference type="InterPro" id="IPR015727">
    <property type="entry name" value="Protein_Kinase_C_mu-related"/>
</dbReference>
<dbReference type="InterPro" id="IPR008271">
    <property type="entry name" value="Ser/Thr_kinase_AS"/>
</dbReference>
<dbReference type="PANTHER" id="PTHR22968">
    <property type="entry name" value="PROTEIN KINASE C, MU"/>
    <property type="match status" value="1"/>
</dbReference>
<dbReference type="PANTHER" id="PTHR22968:SF12">
    <property type="entry name" value="SERINE_THREONINE-PROTEIN KINASE D2"/>
    <property type="match status" value="1"/>
</dbReference>
<dbReference type="Pfam" id="PF00130">
    <property type="entry name" value="C1_1"/>
    <property type="match status" value="2"/>
</dbReference>
<dbReference type="Pfam" id="PF00169">
    <property type="entry name" value="PH"/>
    <property type="match status" value="1"/>
</dbReference>
<dbReference type="Pfam" id="PF00069">
    <property type="entry name" value="Pkinase"/>
    <property type="match status" value="1"/>
</dbReference>
<dbReference type="PIRSF" id="PIRSF000552">
    <property type="entry name" value="PKC_mu_nu_D2"/>
    <property type="match status" value="1"/>
</dbReference>
<dbReference type="PRINTS" id="PR00008">
    <property type="entry name" value="DAGPEDOMAIN"/>
</dbReference>
<dbReference type="SMART" id="SM00109">
    <property type="entry name" value="C1"/>
    <property type="match status" value="2"/>
</dbReference>
<dbReference type="SMART" id="SM00233">
    <property type="entry name" value="PH"/>
    <property type="match status" value="1"/>
</dbReference>
<dbReference type="SMART" id="SM00220">
    <property type="entry name" value="S_TKc"/>
    <property type="match status" value="1"/>
</dbReference>
<dbReference type="SUPFAM" id="SSF57889">
    <property type="entry name" value="Cysteine-rich domain"/>
    <property type="match status" value="2"/>
</dbReference>
<dbReference type="SUPFAM" id="SSF50729">
    <property type="entry name" value="PH domain-like"/>
    <property type="match status" value="1"/>
</dbReference>
<dbReference type="SUPFAM" id="SSF56112">
    <property type="entry name" value="Protein kinase-like (PK-like)"/>
    <property type="match status" value="1"/>
</dbReference>
<dbReference type="PROSITE" id="PS50003">
    <property type="entry name" value="PH_DOMAIN"/>
    <property type="match status" value="1"/>
</dbReference>
<dbReference type="PROSITE" id="PS00107">
    <property type="entry name" value="PROTEIN_KINASE_ATP"/>
    <property type="match status" value="1"/>
</dbReference>
<dbReference type="PROSITE" id="PS50011">
    <property type="entry name" value="PROTEIN_KINASE_DOM"/>
    <property type="match status" value="1"/>
</dbReference>
<dbReference type="PROSITE" id="PS00108">
    <property type="entry name" value="PROTEIN_KINASE_ST"/>
    <property type="match status" value="1"/>
</dbReference>
<dbReference type="PROSITE" id="PS00479">
    <property type="entry name" value="ZF_DAG_PE_1"/>
    <property type="match status" value="2"/>
</dbReference>
<dbReference type="PROSITE" id="PS50081">
    <property type="entry name" value="ZF_DAG_PE_2"/>
    <property type="match status" value="2"/>
</dbReference>
<name>KPCD2_MOUSE</name>
<gene>
    <name type="primary">Prkd2</name>
</gene>
<reference key="1">
    <citation type="journal article" date="2005" name="Science">
        <title>The transcriptional landscape of the mammalian genome.</title>
        <authorList>
            <person name="Carninci P."/>
            <person name="Kasukawa T."/>
            <person name="Katayama S."/>
            <person name="Gough J."/>
            <person name="Frith M.C."/>
            <person name="Maeda N."/>
            <person name="Oyama R."/>
            <person name="Ravasi T."/>
            <person name="Lenhard B."/>
            <person name="Wells C."/>
            <person name="Kodzius R."/>
            <person name="Shimokawa K."/>
            <person name="Bajic V.B."/>
            <person name="Brenner S.E."/>
            <person name="Batalov S."/>
            <person name="Forrest A.R."/>
            <person name="Zavolan M."/>
            <person name="Davis M.J."/>
            <person name="Wilming L.G."/>
            <person name="Aidinis V."/>
            <person name="Allen J.E."/>
            <person name="Ambesi-Impiombato A."/>
            <person name="Apweiler R."/>
            <person name="Aturaliya R.N."/>
            <person name="Bailey T.L."/>
            <person name="Bansal M."/>
            <person name="Baxter L."/>
            <person name="Beisel K.W."/>
            <person name="Bersano T."/>
            <person name="Bono H."/>
            <person name="Chalk A.M."/>
            <person name="Chiu K.P."/>
            <person name="Choudhary V."/>
            <person name="Christoffels A."/>
            <person name="Clutterbuck D.R."/>
            <person name="Crowe M.L."/>
            <person name="Dalla E."/>
            <person name="Dalrymple B.P."/>
            <person name="de Bono B."/>
            <person name="Della Gatta G."/>
            <person name="di Bernardo D."/>
            <person name="Down T."/>
            <person name="Engstrom P."/>
            <person name="Fagiolini M."/>
            <person name="Faulkner G."/>
            <person name="Fletcher C.F."/>
            <person name="Fukushima T."/>
            <person name="Furuno M."/>
            <person name="Futaki S."/>
            <person name="Gariboldi M."/>
            <person name="Georgii-Hemming P."/>
            <person name="Gingeras T.R."/>
            <person name="Gojobori T."/>
            <person name="Green R.E."/>
            <person name="Gustincich S."/>
            <person name="Harbers M."/>
            <person name="Hayashi Y."/>
            <person name="Hensch T.K."/>
            <person name="Hirokawa N."/>
            <person name="Hill D."/>
            <person name="Huminiecki L."/>
            <person name="Iacono M."/>
            <person name="Ikeo K."/>
            <person name="Iwama A."/>
            <person name="Ishikawa T."/>
            <person name="Jakt M."/>
            <person name="Kanapin A."/>
            <person name="Katoh M."/>
            <person name="Kawasawa Y."/>
            <person name="Kelso J."/>
            <person name="Kitamura H."/>
            <person name="Kitano H."/>
            <person name="Kollias G."/>
            <person name="Krishnan S.P."/>
            <person name="Kruger A."/>
            <person name="Kummerfeld S.K."/>
            <person name="Kurochkin I.V."/>
            <person name="Lareau L.F."/>
            <person name="Lazarevic D."/>
            <person name="Lipovich L."/>
            <person name="Liu J."/>
            <person name="Liuni S."/>
            <person name="McWilliam S."/>
            <person name="Madan Babu M."/>
            <person name="Madera M."/>
            <person name="Marchionni L."/>
            <person name="Matsuda H."/>
            <person name="Matsuzawa S."/>
            <person name="Miki H."/>
            <person name="Mignone F."/>
            <person name="Miyake S."/>
            <person name="Morris K."/>
            <person name="Mottagui-Tabar S."/>
            <person name="Mulder N."/>
            <person name="Nakano N."/>
            <person name="Nakauchi H."/>
            <person name="Ng P."/>
            <person name="Nilsson R."/>
            <person name="Nishiguchi S."/>
            <person name="Nishikawa S."/>
            <person name="Nori F."/>
            <person name="Ohara O."/>
            <person name="Okazaki Y."/>
            <person name="Orlando V."/>
            <person name="Pang K.C."/>
            <person name="Pavan W.J."/>
            <person name="Pavesi G."/>
            <person name="Pesole G."/>
            <person name="Petrovsky N."/>
            <person name="Piazza S."/>
            <person name="Reed J."/>
            <person name="Reid J.F."/>
            <person name="Ring B.Z."/>
            <person name="Ringwald M."/>
            <person name="Rost B."/>
            <person name="Ruan Y."/>
            <person name="Salzberg S.L."/>
            <person name="Sandelin A."/>
            <person name="Schneider C."/>
            <person name="Schoenbach C."/>
            <person name="Sekiguchi K."/>
            <person name="Semple C.A."/>
            <person name="Seno S."/>
            <person name="Sessa L."/>
            <person name="Sheng Y."/>
            <person name="Shibata Y."/>
            <person name="Shimada H."/>
            <person name="Shimada K."/>
            <person name="Silva D."/>
            <person name="Sinclair B."/>
            <person name="Sperling S."/>
            <person name="Stupka E."/>
            <person name="Sugiura K."/>
            <person name="Sultana R."/>
            <person name="Takenaka Y."/>
            <person name="Taki K."/>
            <person name="Tammoja K."/>
            <person name="Tan S.L."/>
            <person name="Tang S."/>
            <person name="Taylor M.S."/>
            <person name="Tegner J."/>
            <person name="Teichmann S.A."/>
            <person name="Ueda H.R."/>
            <person name="van Nimwegen E."/>
            <person name="Verardo R."/>
            <person name="Wei C.L."/>
            <person name="Yagi K."/>
            <person name="Yamanishi H."/>
            <person name="Zabarovsky E."/>
            <person name="Zhu S."/>
            <person name="Zimmer A."/>
            <person name="Hide W."/>
            <person name="Bult C."/>
            <person name="Grimmond S.M."/>
            <person name="Teasdale R.D."/>
            <person name="Liu E.T."/>
            <person name="Brusic V."/>
            <person name="Quackenbush J."/>
            <person name="Wahlestedt C."/>
            <person name="Mattick J.S."/>
            <person name="Hume D.A."/>
            <person name="Kai C."/>
            <person name="Sasaki D."/>
            <person name="Tomaru Y."/>
            <person name="Fukuda S."/>
            <person name="Kanamori-Katayama M."/>
            <person name="Suzuki M."/>
            <person name="Aoki J."/>
            <person name="Arakawa T."/>
            <person name="Iida J."/>
            <person name="Imamura K."/>
            <person name="Itoh M."/>
            <person name="Kato T."/>
            <person name="Kawaji H."/>
            <person name="Kawagashira N."/>
            <person name="Kawashima T."/>
            <person name="Kojima M."/>
            <person name="Kondo S."/>
            <person name="Konno H."/>
            <person name="Nakano K."/>
            <person name="Ninomiya N."/>
            <person name="Nishio T."/>
            <person name="Okada M."/>
            <person name="Plessy C."/>
            <person name="Shibata K."/>
            <person name="Shiraki T."/>
            <person name="Suzuki S."/>
            <person name="Tagami M."/>
            <person name="Waki K."/>
            <person name="Watahiki A."/>
            <person name="Okamura-Oho Y."/>
            <person name="Suzuki H."/>
            <person name="Kawai J."/>
            <person name="Hayashizaki Y."/>
        </authorList>
    </citation>
    <scope>NUCLEOTIDE SEQUENCE [LARGE SCALE MRNA]</scope>
    <source>
        <strain>C57BL/6J</strain>
        <strain>NOD</strain>
        <tissue>Thymus</tissue>
        <tissue>Vagina</tissue>
    </source>
</reference>
<reference key="2">
    <citation type="journal article" date="2004" name="Genome Res.">
        <title>The status, quality, and expansion of the NIH full-length cDNA project: the Mammalian Gene Collection (MGC).</title>
        <authorList>
            <consortium name="The MGC Project Team"/>
        </authorList>
    </citation>
    <scope>NUCLEOTIDE SEQUENCE [LARGE SCALE MRNA]</scope>
    <source>
        <strain>FVB/N</strain>
        <tissue>Colon</tissue>
        <tissue>Mammary tumor</tissue>
    </source>
</reference>
<reference key="3">
    <citation type="journal article" date="2007" name="J. Cell. Physiol.">
        <title>Protein kinase D2 potentiates MEK/ERK/RSK signaling, c-Fos accumulation and DNA synthesis induced by bombesin in Swiss 3T3 cells.</title>
        <authorList>
            <person name="Sinnett-Smith J."/>
            <person name="Zhukova E."/>
            <person name="Rey O."/>
            <person name="Rozengurt E."/>
        </authorList>
    </citation>
    <scope>FUNCTION IN CELL PROLIFERATION</scope>
</reference>
<reference key="4">
    <citation type="journal article" date="2007" name="Proc. Natl. Acad. Sci. U.S.A.">
        <title>Large-scale phosphorylation analysis of mouse liver.</title>
        <authorList>
            <person name="Villen J."/>
            <person name="Beausoleil S.A."/>
            <person name="Gerber S.A."/>
            <person name="Gygi S.P."/>
        </authorList>
    </citation>
    <scope>IDENTIFICATION BY MASS SPECTROMETRY [LARGE SCALE ANALYSIS]</scope>
    <source>
        <tissue>Liver</tissue>
    </source>
</reference>
<reference key="5">
    <citation type="journal article" date="2010" name="Biochem. J.">
        <title>Unique functions for protein kinase D1 and protein kinase D2 in mammalian cells.</title>
        <authorList>
            <person name="Matthews S.A."/>
            <person name="Navarro M.N."/>
            <person name="Sinclair L.V."/>
            <person name="Emslie E."/>
            <person name="Feijoo-Carnero C."/>
            <person name="Cantrell D.A."/>
        </authorList>
    </citation>
    <scope>FUNCTION IN T-CELLS</scope>
    <scope>CATALYTIC ACTIVITY</scope>
    <scope>PHOSPHORYLATION AT SER-707; SER-711 AND SER-873</scope>
    <scope>MUTAGENESIS OF SER-707 AND SER-711</scope>
</reference>
<reference key="6">
    <citation type="journal article" date="2010" name="Cell">
        <title>A tissue-specific atlas of mouse protein phosphorylation and expression.</title>
        <authorList>
            <person name="Huttlin E.L."/>
            <person name="Jedrychowski M.P."/>
            <person name="Elias J.E."/>
            <person name="Goswami T."/>
            <person name="Rad R."/>
            <person name="Beausoleil S.A."/>
            <person name="Villen J."/>
            <person name="Haas W."/>
            <person name="Sowa M.E."/>
            <person name="Gygi S.P."/>
        </authorList>
    </citation>
    <scope>PHOSPHORYLATION [LARGE SCALE ANALYSIS] AT SER-197; SER-200; SER-206; SER-211; SER-212; SER-214 AND SER-711</scope>
    <scope>IDENTIFICATION BY MASS SPECTROMETRY [LARGE SCALE ANALYSIS]</scope>
    <source>
        <tissue>Brain</tissue>
        <tissue>Brown adipose tissue</tissue>
        <tissue>Heart</tissue>
        <tissue>Kidney</tissue>
        <tissue>Liver</tissue>
        <tissue>Lung</tissue>
        <tissue>Pancreas</tissue>
        <tissue>Spleen</tissue>
        <tissue>Testis</tissue>
    </source>
</reference>
<sequence>MAAAPSHPAGLPGSPGPGSPPPPGGLDLQSPPPLLPQIPAPGSGVSFHIQIGLTREFVLLPAASELAHVKQLACSIVDQKFPECGFYGLYDKILLFKHDPTSANLLQLVRSAADIQEGDLVEVVLSASATFEDFQIRPHALTVHSYRAPAFCDHCGEMLFGLVRQGLKCDGCGLNYHKRCAFSIPNNCSGARKRRLSSTSLASGHSVRLGSSESLPCTAEELSRSTTDLLPRRPPSSSSSSSSSSFYTGRPIELDKMLMSKVKVPHTFLIHSYTRPTVCQACKKLLKGLFRQGLQCKDCKFNCHKRCATRVPNDCLGEALINGDVPMEEAADYSEADKSSISDELEDSGVIPGSHSESALHASEEEEGEGHKAQSSLGYIPLMRVVQSVRHTTRKSSTTLREGWVVHYSNKDTLRKRHYWRLDCKCITLFQNNTTNRYYKEIPLSEILAVEPAQNFSLVPPGTNPHCFEIITANVTYFVGETPGGAPGGPSGQGTEAVRGWETAIRQALMPVILQDAPSAPGHTPHRQASLSISVSNSQIQENVDIATVYQIFPDEVLGSGQFGVVYGGKHRKTGRDVAVKVIDKLRFPTKQESQLRNEVAILQSLRHPGIVNLECMFETPEKVFVVMEKLHGDMLEMILSSEKGRLPERLTKFLITQILVALRHLHFKNIVHCDLKPENVLLASADPFPQVKLCDFGFARIIGEKSFRRSVVGTPAYLAPEVLLNQGYNRSLDMWSVGVIMYVSLSGTFPFNEDEDINDQIQNAAFMYPASPWSHISSGAIDLINNLLQVKMRKRYSVDKSLSHPWLQEYQTWLDLRELEGKMGERYITHESDDARWDQFVAERHGTPAEGDLGGACLPQDHEMQGLAERISIL</sequence>
<evidence type="ECO:0000250" key="1">
    <source>
        <dbReference type="UniProtKB" id="O94806"/>
    </source>
</evidence>
<evidence type="ECO:0000250" key="2">
    <source>
        <dbReference type="UniProtKB" id="Q15139"/>
    </source>
</evidence>
<evidence type="ECO:0000250" key="3">
    <source>
        <dbReference type="UniProtKB" id="Q9BZL6"/>
    </source>
</evidence>
<evidence type="ECO:0000255" key="4">
    <source>
        <dbReference type="PROSITE-ProRule" id="PRU00145"/>
    </source>
</evidence>
<evidence type="ECO:0000255" key="5">
    <source>
        <dbReference type="PROSITE-ProRule" id="PRU00159"/>
    </source>
</evidence>
<evidence type="ECO:0000255" key="6">
    <source>
        <dbReference type="PROSITE-ProRule" id="PRU00226"/>
    </source>
</evidence>
<evidence type="ECO:0000255" key="7">
    <source>
        <dbReference type="PROSITE-ProRule" id="PRU10027"/>
    </source>
</evidence>
<evidence type="ECO:0000256" key="8">
    <source>
        <dbReference type="SAM" id="MobiDB-lite"/>
    </source>
</evidence>
<evidence type="ECO:0000269" key="9">
    <source>
    </source>
</evidence>
<evidence type="ECO:0000269" key="10">
    <source>
    </source>
</evidence>
<evidence type="ECO:0000305" key="11"/>
<evidence type="ECO:0007744" key="12">
    <source>
    </source>
</evidence>
<comment type="function">
    <text evidence="3 9 10">Serine/threonine-protein kinase that converts transient diacylglycerol (DAG) signals into prolonged physiological effects downstream of PKC, and is involved in the regulation of cell proliferation via MAPK1/3 (ERK1/2) signaling, oxidative stress-induced NF-kappa-B activation, inhibition of HDAC7 transcriptional repression, signaling downstream of T-cell antigen receptor (TCR) and cytokine production, and plays a role in Golgi membrane trafficking, angiogenesis, secretory granule release and cell adhesion (PubMed:17226786, PubMed:20819079). May potentiate mitogenesis induced by the neuropeptide bombesin by mediating an increase in the duration of MAPK1/3 (ERK1/2) signaling, which leads to accumulation of immediate-early gene products including FOS that stimulate cell cycle progression (PubMed:17226786). In response to oxidative stress, is phosphorylated at Tyr-438 and Tyr-718 by ABL1, which leads to the activation of PRKD2 without increasing its catalytic activity, and mediates activation of NF-kappa-B (By similarity). In response to the activation of the gastrin receptor CCKBR, is phosphorylated at Ser-244 by CSNK1D and CSNK1E, translocates to the nucleus, phosphorylates HDAC7, leading to nuclear export of HDAC7 and inhibition of HDAC7 transcriptional repression of NR4A1/NUR77 (By similarity). Upon TCR stimulation, is activated independently of ZAP70, translocates from the cytoplasm to the nucleus and is required for interleukin-2 (IL2) promoter up-regulation. During adaptive immune responses, is required in peripheral T-lymphocytes for the production of the effector cytokines IL2 and IFNG after TCR engagement and for optimal induction of antibody responses to antigens (PubMed:20819079). In epithelial cells stimulated with lysophosphatidic acid (LPA), is activated through a PKC-dependent pathway and mediates LPA-stimulated interleukin-8 (IL8) secretion via a NF-kappa-B-dependent pathway (By similarity). During TCR-induced T-cell activation, interacts with and is activated by the tyrosine kinase LCK, which results in the activation of the NFAT transcription factors (By similarity). In the trans-Golgi network (TGN), regulates the fission of transport vesicles that are on their way to the plasma membrane and in polarized cells is involved in the transport of proteins from the TGN to the basolateral membrane (By similarity). Plays an important role in endothelial cell proliferation and migration prior to angiogenesis, partly through modulation of the expression of KDR/VEGFR2 and FGFR1, two key growth factor receptors involved in angiogenesis (By similarity). In secretory pathway, is required for the release of chromogranin-A (CHGA)-containing secretory granules from the TGN (By similarity). Downstream of PRKCA, plays important roles in angiotensin-2-induced monocyte adhesion to endothelial cells (By similarity).</text>
</comment>
<comment type="catalytic activity">
    <reaction evidence="10">
        <text>L-seryl-[protein] + ATP = O-phospho-L-seryl-[protein] + ADP + H(+)</text>
        <dbReference type="Rhea" id="RHEA:17989"/>
        <dbReference type="Rhea" id="RHEA-COMP:9863"/>
        <dbReference type="Rhea" id="RHEA-COMP:11604"/>
        <dbReference type="ChEBI" id="CHEBI:15378"/>
        <dbReference type="ChEBI" id="CHEBI:29999"/>
        <dbReference type="ChEBI" id="CHEBI:30616"/>
        <dbReference type="ChEBI" id="CHEBI:83421"/>
        <dbReference type="ChEBI" id="CHEBI:456216"/>
        <dbReference type="EC" id="2.7.11.13"/>
    </reaction>
</comment>
<comment type="catalytic activity">
    <reaction evidence="10">
        <text>L-threonyl-[protein] + ATP = O-phospho-L-threonyl-[protein] + ADP + H(+)</text>
        <dbReference type="Rhea" id="RHEA:46608"/>
        <dbReference type="Rhea" id="RHEA-COMP:11060"/>
        <dbReference type="Rhea" id="RHEA-COMP:11605"/>
        <dbReference type="ChEBI" id="CHEBI:15378"/>
        <dbReference type="ChEBI" id="CHEBI:30013"/>
        <dbReference type="ChEBI" id="CHEBI:30616"/>
        <dbReference type="ChEBI" id="CHEBI:61977"/>
        <dbReference type="ChEBI" id="CHEBI:456216"/>
        <dbReference type="EC" id="2.7.11.13"/>
    </reaction>
</comment>
<comment type="cofactor">
    <cofactor evidence="3">
        <name>Mg(2+)</name>
        <dbReference type="ChEBI" id="CHEBI:18420"/>
    </cofactor>
</comment>
<comment type="activity regulation">
    <text evidence="3">Activated by DAG and phorbol esters. Phorbol-ester/DAG-type domains bind DAG, mediating translocation to membranes. Autophosphorylation of Ser-711 and phosphorylation of Ser-707 by PKC relieves auto-inhibition by the PH domain. Catalytic activity is further increased by phosphorylation at Tyr-718 in response to oxidative stress.</text>
</comment>
<comment type="subunit">
    <text evidence="3">Interacts (via C-terminus) with LCK. Interacts (via N-terminus and zing-finger domain 1 and 2) with PRKCD in response to oxidative stress; the interaction is independent of PRKD2 tyrosine phosphorylation.</text>
</comment>
<comment type="subcellular location">
    <subcellularLocation>
        <location evidence="3">Cytoplasm</location>
    </subcellularLocation>
    <subcellularLocation>
        <location evidence="2">Cell membrane</location>
    </subcellularLocation>
    <subcellularLocation>
        <location evidence="3">Golgi apparatus</location>
        <location evidence="3">trans-Golgi network</location>
    </subcellularLocation>
    <text evidence="3">Translocation to the cell membrane is required for kinase activation. Accumulates in the nucleus upon CK1-mediated phosphorylation after activation of G-protein-coupled receptors. Nuclear accumulation is regulated by blocking nuclear export of active PRKD2 rather than by increasing import.</text>
</comment>
<comment type="PTM">
    <text evidence="3">Phosphorylation of Ser-873 correlates with the activation status of the kinase. Ser-707 is probably phosphorylated by PKC. Phosphorylation at Ser-244 by CSNK1D and CSNK1E promotes nuclear localization and substrate targeting. Phosphorylation at Ser-244, Ser-707 and Ser-711 is required for nuclear localization. Phosphorylated at Tyr-438 by ABL1 in response to oxidative stress. Phosphorylated at Tyr-718 by ABL1 specifically in response to oxidative stress; requires prior phosphorylation at Ser-707 or/and Ser-711.</text>
</comment>
<comment type="similarity">
    <text evidence="11">Belongs to the protein kinase superfamily. CAMK Ser/Thr protein kinase family. PKD subfamily.</text>
</comment>
<feature type="chain" id="PRO_0000260436" description="Serine/threonine-protein kinase D2">
    <location>
        <begin position="1"/>
        <end position="875"/>
    </location>
</feature>
<feature type="domain" description="PH" evidence="4">
    <location>
        <begin position="398"/>
        <end position="510"/>
    </location>
</feature>
<feature type="domain" description="Protein kinase" evidence="5">
    <location>
        <begin position="552"/>
        <end position="808"/>
    </location>
</feature>
<feature type="zinc finger region" description="Phorbol-ester/DAG-type 1" evidence="6">
    <location>
        <begin position="138"/>
        <end position="188"/>
    </location>
</feature>
<feature type="zinc finger region" description="Phorbol-ester/DAG-type 2" evidence="6">
    <location>
        <begin position="265"/>
        <end position="315"/>
    </location>
</feature>
<feature type="region of interest" description="Disordered" evidence="8">
    <location>
        <begin position="1"/>
        <end position="35"/>
    </location>
</feature>
<feature type="region of interest" description="Disordered" evidence="8">
    <location>
        <begin position="224"/>
        <end position="247"/>
    </location>
</feature>
<feature type="region of interest" description="Disordered" evidence="8">
    <location>
        <begin position="332"/>
        <end position="374"/>
    </location>
</feature>
<feature type="short sequence motif" description="Important for ABL1-mediated Tyr-718 phosphorylation" evidence="3">
    <location>
        <begin position="725"/>
        <end position="727"/>
    </location>
</feature>
<feature type="compositionally biased region" description="Low complexity" evidence="8">
    <location>
        <begin position="1"/>
        <end position="12"/>
    </location>
</feature>
<feature type="compositionally biased region" description="Pro residues" evidence="8">
    <location>
        <begin position="14"/>
        <end position="35"/>
    </location>
</feature>
<feature type="compositionally biased region" description="Low complexity" evidence="8">
    <location>
        <begin position="236"/>
        <end position="245"/>
    </location>
</feature>
<feature type="active site" description="Proton acceptor" evidence="5 7">
    <location>
        <position position="675"/>
    </location>
</feature>
<feature type="binding site" evidence="5">
    <location>
        <begin position="558"/>
        <end position="566"/>
    </location>
    <ligand>
        <name>ATP</name>
        <dbReference type="ChEBI" id="CHEBI:30616"/>
    </ligand>
</feature>
<feature type="binding site" evidence="5">
    <location>
        <position position="581"/>
    </location>
    <ligand>
        <name>ATP</name>
        <dbReference type="ChEBI" id="CHEBI:30616"/>
    </ligand>
</feature>
<feature type="modified residue" description="Phosphoserine" evidence="1">
    <location>
        <position position="30"/>
    </location>
</feature>
<feature type="modified residue" description="Phosphotyrosine" evidence="2">
    <location>
        <position position="87"/>
    </location>
</feature>
<feature type="modified residue" description="Phosphoserine" evidence="12">
    <location>
        <position position="197"/>
    </location>
</feature>
<feature type="modified residue" description="Phosphoserine" evidence="3">
    <location>
        <position position="198"/>
    </location>
</feature>
<feature type="modified residue" description="Phosphoserine" evidence="12">
    <location>
        <position position="200"/>
    </location>
</feature>
<feature type="modified residue" description="Phosphoserine" evidence="3">
    <location>
        <position position="203"/>
    </location>
</feature>
<feature type="modified residue" description="Phosphoserine" evidence="12">
    <location>
        <position position="206"/>
    </location>
</feature>
<feature type="modified residue" description="Phosphoserine" evidence="12">
    <location>
        <position position="211"/>
    </location>
</feature>
<feature type="modified residue" description="Phosphoserine" evidence="12">
    <location>
        <position position="212"/>
    </location>
</feature>
<feature type="modified residue" description="Phosphoserine" evidence="12">
    <location>
        <position position="214"/>
    </location>
</feature>
<feature type="modified residue" description="Phosphoserine; by CSNK1D and CSNK1E" evidence="3">
    <location>
        <position position="244"/>
    </location>
</feature>
<feature type="modified residue" description="Phosphoserine" evidence="3">
    <location>
        <position position="245"/>
    </location>
</feature>
<feature type="modified residue" description="Phosphotyrosine" evidence="2">
    <location>
        <position position="408"/>
    </location>
</feature>
<feature type="modified residue" description="Phosphotyrosine; by ABL1" evidence="3">
    <location>
        <position position="439"/>
    </location>
</feature>
<feature type="modified residue" description="Phosphoserine" evidence="3">
    <location>
        <position position="519"/>
    </location>
</feature>
<feature type="modified residue" description="Phosphoserine; by PKC" evidence="10">
    <location>
        <position position="707"/>
    </location>
</feature>
<feature type="modified residue" description="Phosphoserine; by autocatalysis" evidence="10 12">
    <location>
        <position position="711"/>
    </location>
</feature>
<feature type="modified residue" description="Phosphotyrosine; by ABL1" evidence="3">
    <location>
        <position position="718"/>
    </location>
</feature>
<feature type="modified residue" description="Phosphoserine; by autocatalysis" evidence="10">
    <location>
        <position position="873"/>
    </location>
</feature>
<feature type="mutagenesis site" description="Strong decrease in catalytic activity; when associated with A-711." evidence="10">
    <original>S</original>
    <variation>A</variation>
    <location>
        <position position="707"/>
    </location>
</feature>
<feature type="mutagenesis site" description="Strong decrease in catalytic activity; when associated with A-707." evidence="10">
    <original>S</original>
    <variation>A</variation>
    <location>
        <position position="711"/>
    </location>
</feature>
<feature type="sequence conflict" description="In Ref. 1; BAE42012." evidence="11" ref="1">
    <original>E</original>
    <variation>G</variation>
    <location>
        <position position="213"/>
    </location>
</feature>
<feature type="sequence conflict" description="In Ref. 1; BAE41652." evidence="11" ref="1">
    <original>E</original>
    <variation>G</variation>
    <location>
        <position position="220"/>
    </location>
</feature>
<feature type="sequence conflict" description="In Ref. 1; BAE32326/BAE41652." evidence="11" ref="1">
    <original>R</original>
    <variation>H</variation>
    <location>
        <position position="310"/>
    </location>
</feature>
<feature type="sequence conflict" description="In Ref. 1; BAE42012." evidence="11" ref="1">
    <original>K</original>
    <variation>N</variation>
    <location>
        <position position="630"/>
    </location>
</feature>
<keyword id="KW-1064">Adaptive immunity</keyword>
<keyword id="KW-0037">Angiogenesis</keyword>
<keyword id="KW-0067">ATP-binding</keyword>
<keyword id="KW-0130">Cell adhesion</keyword>
<keyword id="KW-1003">Cell membrane</keyword>
<keyword id="KW-0963">Cytoplasm</keyword>
<keyword id="KW-0333">Golgi apparatus</keyword>
<keyword id="KW-0391">Immunity</keyword>
<keyword id="KW-0418">Kinase</keyword>
<keyword id="KW-0460">Magnesium</keyword>
<keyword id="KW-0472">Membrane</keyword>
<keyword id="KW-0479">Metal-binding</keyword>
<keyword id="KW-0547">Nucleotide-binding</keyword>
<keyword id="KW-0597">Phosphoprotein</keyword>
<keyword id="KW-1185">Reference proteome</keyword>
<keyword id="KW-0677">Repeat</keyword>
<keyword id="KW-0723">Serine/threonine-protein kinase</keyword>
<keyword id="KW-0808">Transferase</keyword>
<keyword id="KW-0862">Zinc</keyword>
<keyword id="KW-0863">Zinc-finger</keyword>
<proteinExistence type="evidence at protein level"/>
<protein>
    <recommendedName>
        <fullName>Serine/threonine-protein kinase D2</fullName>
        <ecNumber evidence="10">2.7.11.13</ecNumber>
    </recommendedName>
    <alternativeName>
        <fullName>nPKC-D2</fullName>
    </alternativeName>
</protein>
<accession>Q8BZ03</accession>
<accession>Q3TCE5</accession>
<accession>Q3TDF0</accession>
<accession>Q3U4V4</accession>
<organism>
    <name type="scientific">Mus musculus</name>
    <name type="common">Mouse</name>
    <dbReference type="NCBI Taxonomy" id="10090"/>
    <lineage>
        <taxon>Eukaryota</taxon>
        <taxon>Metazoa</taxon>
        <taxon>Chordata</taxon>
        <taxon>Craniata</taxon>
        <taxon>Vertebrata</taxon>
        <taxon>Euteleostomi</taxon>
        <taxon>Mammalia</taxon>
        <taxon>Eutheria</taxon>
        <taxon>Euarchontoglires</taxon>
        <taxon>Glires</taxon>
        <taxon>Rodentia</taxon>
        <taxon>Myomorpha</taxon>
        <taxon>Muroidea</taxon>
        <taxon>Muridae</taxon>
        <taxon>Murinae</taxon>
        <taxon>Mus</taxon>
        <taxon>Mus</taxon>
    </lineage>
</organism>